<comment type="subcellular location">
    <subcellularLocation>
        <location evidence="4">Secreted</location>
        <location evidence="4">Extracellular space</location>
    </subcellularLocation>
</comment>
<comment type="tissue specificity">
    <text evidence="2">Chorionic epithelium (trophectoderm) and placental cotyledons.</text>
</comment>
<comment type="developmental stage">
    <text evidence="2">Expressed at 120 dpc.</text>
</comment>
<comment type="miscellaneous">
    <text evidence="2">On the 2D-gel the determined pI of this protein is: 6.9, its MW is: 60 kDa.</text>
</comment>
<comment type="similarity">
    <text evidence="1">Belongs to the peptidase A1 family.</text>
</comment>
<dbReference type="EC" id="3.4.23.-"/>
<dbReference type="iPTMnet" id="P85326"/>
<dbReference type="GO" id="GO:0005576">
    <property type="term" value="C:extracellular region"/>
    <property type="evidence" value="ECO:0007669"/>
    <property type="project" value="UniProtKB-SubCell"/>
</dbReference>
<dbReference type="GO" id="GO:0004190">
    <property type="term" value="F:aspartic-type endopeptidase activity"/>
    <property type="evidence" value="ECO:0007669"/>
    <property type="project" value="UniProtKB-KW"/>
</dbReference>
<dbReference type="GO" id="GO:0006508">
    <property type="term" value="P:proteolysis"/>
    <property type="evidence" value="ECO:0007669"/>
    <property type="project" value="UniProtKB-KW"/>
</dbReference>
<proteinExistence type="evidence at protein level"/>
<evidence type="ECO:0000255" key="1"/>
<evidence type="ECO:0000269" key="2">
    <source>
    </source>
</evidence>
<evidence type="ECO:0000303" key="3">
    <source>
    </source>
</evidence>
<evidence type="ECO:0000305" key="4"/>
<reference key="1">
    <citation type="journal article" date="2009" name="Anim. Reprod. Sci.">
        <title>Identification of multiple pregnancy-associated glycoproteins (PAGs) purified from the European bison (Eb; Bison bonasus L.) placentas.</title>
        <authorList>
            <person name="Kiewisz J."/>
            <person name="Melo de Sousa N."/>
            <person name="Beckers J.-F.M.P."/>
            <person name="Panasiewicz G."/>
            <person name="Gizejewski Z."/>
            <person name="Szafranska B."/>
        </authorList>
    </citation>
    <scope>PROTEIN SEQUENCE</scope>
    <scope>TISSUE SPECIFICITY</scope>
    <scope>DEVELOPMENTAL STAGE</scope>
    <scope>GLYCOSYLATION AT ASN-4</scope>
    <source>
        <tissue>Placenta</tissue>
    </source>
</reference>
<protein>
    <recommendedName>
        <fullName>Pregnancy-associated glycoprotein 60H</fullName>
        <ecNumber>3.4.23.-</ecNumber>
    </recommendedName>
    <alternativeName>
        <fullName>EbPAG-H 60 kDa</fullName>
    </alternativeName>
</protein>
<sequence length="20" mass="2328">RGSNLTTHPLRNIKDLVVYM</sequence>
<name>PA60H_BISBO</name>
<accession>P85326</accession>
<organism>
    <name type="scientific">Bison bonasus</name>
    <name type="common">European bison</name>
    <dbReference type="NCBI Taxonomy" id="9902"/>
    <lineage>
        <taxon>Eukaryota</taxon>
        <taxon>Metazoa</taxon>
        <taxon>Chordata</taxon>
        <taxon>Craniata</taxon>
        <taxon>Vertebrata</taxon>
        <taxon>Euteleostomi</taxon>
        <taxon>Mammalia</taxon>
        <taxon>Eutheria</taxon>
        <taxon>Laurasiatheria</taxon>
        <taxon>Artiodactyla</taxon>
        <taxon>Ruminantia</taxon>
        <taxon>Pecora</taxon>
        <taxon>Bovidae</taxon>
        <taxon>Bovinae</taxon>
        <taxon>Bison</taxon>
    </lineage>
</organism>
<feature type="chain" id="PRO_0000314070" description="Pregnancy-associated glycoprotein 60H">
    <location>
        <begin position="1"/>
        <end position="20" status="greater than"/>
    </location>
</feature>
<feature type="glycosylation site" description="N-linked (GlcNAc...) asparagine" evidence="2">
    <location>
        <position position="4"/>
    </location>
</feature>
<feature type="non-terminal residue" evidence="3">
    <location>
        <position position="20"/>
    </location>
</feature>
<keyword id="KW-0064">Aspartyl protease</keyword>
<keyword id="KW-0903">Direct protein sequencing</keyword>
<keyword id="KW-0325">Glycoprotein</keyword>
<keyword id="KW-0378">Hydrolase</keyword>
<keyword id="KW-0645">Protease</keyword>
<keyword id="KW-0964">Secreted</keyword>